<comment type="function">
    <text evidence="1">Involved in the binding of tRNA to the ribosomes.</text>
</comment>
<comment type="subunit">
    <text evidence="1">Part of the 30S ribosomal subunit.</text>
</comment>
<comment type="similarity">
    <text evidence="1">Belongs to the universal ribosomal protein uS10 family.</text>
</comment>
<dbReference type="EMBL" id="CP001217">
    <property type="protein sequence ID" value="ACJ08436.1"/>
    <property type="molecule type" value="Genomic_DNA"/>
</dbReference>
<dbReference type="SMR" id="B6JNF8"/>
<dbReference type="KEGG" id="hpp:HPP12_1284"/>
<dbReference type="HOGENOM" id="CLU_122625_1_3_7"/>
<dbReference type="Proteomes" id="UP000008198">
    <property type="component" value="Chromosome"/>
</dbReference>
<dbReference type="GO" id="GO:1990904">
    <property type="term" value="C:ribonucleoprotein complex"/>
    <property type="evidence" value="ECO:0007669"/>
    <property type="project" value="UniProtKB-KW"/>
</dbReference>
<dbReference type="GO" id="GO:0005840">
    <property type="term" value="C:ribosome"/>
    <property type="evidence" value="ECO:0007669"/>
    <property type="project" value="UniProtKB-KW"/>
</dbReference>
<dbReference type="GO" id="GO:0003735">
    <property type="term" value="F:structural constituent of ribosome"/>
    <property type="evidence" value="ECO:0007669"/>
    <property type="project" value="InterPro"/>
</dbReference>
<dbReference type="GO" id="GO:0000049">
    <property type="term" value="F:tRNA binding"/>
    <property type="evidence" value="ECO:0007669"/>
    <property type="project" value="UniProtKB-UniRule"/>
</dbReference>
<dbReference type="GO" id="GO:0006412">
    <property type="term" value="P:translation"/>
    <property type="evidence" value="ECO:0007669"/>
    <property type="project" value="UniProtKB-UniRule"/>
</dbReference>
<dbReference type="FunFam" id="3.30.70.600:FF:000003">
    <property type="entry name" value="30S ribosomal protein S10"/>
    <property type="match status" value="1"/>
</dbReference>
<dbReference type="Gene3D" id="3.30.70.600">
    <property type="entry name" value="Ribosomal protein S10 domain"/>
    <property type="match status" value="1"/>
</dbReference>
<dbReference type="HAMAP" id="MF_00508">
    <property type="entry name" value="Ribosomal_uS10"/>
    <property type="match status" value="1"/>
</dbReference>
<dbReference type="InterPro" id="IPR001848">
    <property type="entry name" value="Ribosomal_uS10"/>
</dbReference>
<dbReference type="InterPro" id="IPR018268">
    <property type="entry name" value="Ribosomal_uS10_CS"/>
</dbReference>
<dbReference type="InterPro" id="IPR027486">
    <property type="entry name" value="Ribosomal_uS10_dom"/>
</dbReference>
<dbReference type="InterPro" id="IPR036838">
    <property type="entry name" value="Ribosomal_uS10_dom_sf"/>
</dbReference>
<dbReference type="NCBIfam" id="NF001861">
    <property type="entry name" value="PRK00596.1"/>
    <property type="match status" value="1"/>
</dbReference>
<dbReference type="NCBIfam" id="TIGR01049">
    <property type="entry name" value="rpsJ_bact"/>
    <property type="match status" value="1"/>
</dbReference>
<dbReference type="PANTHER" id="PTHR11700">
    <property type="entry name" value="30S RIBOSOMAL PROTEIN S10 FAMILY MEMBER"/>
    <property type="match status" value="1"/>
</dbReference>
<dbReference type="Pfam" id="PF00338">
    <property type="entry name" value="Ribosomal_S10"/>
    <property type="match status" value="1"/>
</dbReference>
<dbReference type="PRINTS" id="PR00971">
    <property type="entry name" value="RIBOSOMALS10"/>
</dbReference>
<dbReference type="SMART" id="SM01403">
    <property type="entry name" value="Ribosomal_S10"/>
    <property type="match status" value="1"/>
</dbReference>
<dbReference type="SUPFAM" id="SSF54999">
    <property type="entry name" value="Ribosomal protein S10"/>
    <property type="match status" value="1"/>
</dbReference>
<dbReference type="PROSITE" id="PS00361">
    <property type="entry name" value="RIBOSOMAL_S10"/>
    <property type="match status" value="1"/>
</dbReference>
<evidence type="ECO:0000255" key="1">
    <source>
        <dbReference type="HAMAP-Rule" id="MF_00508"/>
    </source>
</evidence>
<evidence type="ECO:0000305" key="2"/>
<organism>
    <name type="scientific">Helicobacter pylori (strain P12)</name>
    <dbReference type="NCBI Taxonomy" id="570508"/>
    <lineage>
        <taxon>Bacteria</taxon>
        <taxon>Pseudomonadati</taxon>
        <taxon>Campylobacterota</taxon>
        <taxon>Epsilonproteobacteria</taxon>
        <taxon>Campylobacterales</taxon>
        <taxon>Helicobacteraceae</taxon>
        <taxon>Helicobacter</taxon>
    </lineage>
</organism>
<proteinExistence type="inferred from homology"/>
<keyword id="KW-0687">Ribonucleoprotein</keyword>
<keyword id="KW-0689">Ribosomal protein</keyword>
<reference key="1">
    <citation type="submission" date="2008-10" db="EMBL/GenBank/DDBJ databases">
        <title>The complete genome sequence of Helicobacter pylori strain P12.</title>
        <authorList>
            <person name="Fischer W."/>
            <person name="Windhager L."/>
            <person name="Karnholz A."/>
            <person name="Zeiller M."/>
            <person name="Zimmer R."/>
            <person name="Haas R."/>
        </authorList>
    </citation>
    <scope>NUCLEOTIDE SEQUENCE [LARGE SCALE GENOMIC DNA]</scope>
    <source>
        <strain>P12</strain>
    </source>
</reference>
<protein>
    <recommendedName>
        <fullName evidence="1">Small ribosomal subunit protein uS10</fullName>
    </recommendedName>
    <alternativeName>
        <fullName evidence="2">30S ribosomal protein S10</fullName>
    </alternativeName>
</protein>
<sequence length="104" mass="11966">MEKIRLKLKAYDHRVLDRSVVAIVEAVKRSGSEIRGPIPLPTKNKRYTVLRSPHVNKDSREQFEIRFYSRLIDIISATPETVDSLMKLDLAPEVDVEVTSMETK</sequence>
<feature type="chain" id="PRO_1000127134" description="Small ribosomal subunit protein uS10">
    <location>
        <begin position="1"/>
        <end position="104"/>
    </location>
</feature>
<accession>B6JNF8</accession>
<name>RS10_HELP2</name>
<gene>
    <name evidence="1" type="primary">rpsJ</name>
    <name type="ordered locus">HPP12_1284</name>
</gene>